<proteinExistence type="evidence at transcript level"/>
<sequence length="488" mass="53753">MGNCFGSRGICDRPKNTNIRLSLPAVCFVWQVSMIILFGVFVRYNEEADTNWVYTKKEKNITSDIENDFYFRYPSFQDVHVMIFVGFGFLMTFLKRYSFGAVGFNFLIAAFGLQWALLMQGWFSPLGDDGKIKIGIENLINADFCVASCLIAYGAVLGKVSPVQLLVMTLFGITLYAVEEFIILRVLNAKDAGGSMVIHTFGAYYGLSISRVLYRPNLNKSKHMNGSVYHSDVFAMIGTLFLWMFWPSFNSAICNHGDGQHRAAINTYLALASTVLTTVAISSMFEKTGKLDMVHIQNSTLAGGVAVGTAAEFMLMPYGSLIVGFFCGIISTLGYIYLTPFLEERLKIQDTCGIHNLHAMPGVIGGIVGAISAAAASKEVYGDLGLKNIFSIEGSNVTRLPTVQGGYQAAALCVALCFGIGGGTFVGLVLKLPIWGDPADEHCFNDEMYWEVPEDEESIIPPVLSYNNHMIPNNKHEEMRETNFAEQS</sequence>
<dbReference type="EMBL" id="AF398238">
    <property type="protein sequence ID" value="AAM90586.1"/>
    <property type="molecule type" value="mRNA"/>
</dbReference>
<dbReference type="EMBL" id="AB286865">
    <property type="protein sequence ID" value="BAF63790.1"/>
    <property type="molecule type" value="mRNA"/>
</dbReference>
<dbReference type="EMBL" id="BC066492">
    <property type="protein sequence ID" value="AAH66492.1"/>
    <property type="status" value="ALT_FRAME"/>
    <property type="molecule type" value="mRNA"/>
</dbReference>
<dbReference type="SMR" id="Q8JI14"/>
<dbReference type="FunCoup" id="Q8JI14">
    <property type="interactions" value="134"/>
</dbReference>
<dbReference type="IntAct" id="Q8JI14">
    <property type="interactions" value="1"/>
</dbReference>
<dbReference type="STRING" id="7955.ENSDARP00000131256"/>
<dbReference type="GlyCosmos" id="Q8JI14">
    <property type="glycosylation" value="1 site, No reported glycans"/>
</dbReference>
<dbReference type="PaxDb" id="7955-ENSDARP00000053517"/>
<dbReference type="AGR" id="ZFIN:ZDB-GENE-040426-2595"/>
<dbReference type="ZFIN" id="ZDB-GENE-040426-2595">
    <property type="gene designation" value="rhcgb"/>
</dbReference>
<dbReference type="eggNOG" id="KOG3796">
    <property type="taxonomic scope" value="Eukaryota"/>
</dbReference>
<dbReference type="InParanoid" id="Q8JI14"/>
<dbReference type="PhylomeDB" id="Q8JI14"/>
<dbReference type="PRO" id="PR:Q8JI14"/>
<dbReference type="Proteomes" id="UP000000437">
    <property type="component" value="Unplaced"/>
</dbReference>
<dbReference type="GO" id="GO:0016324">
    <property type="term" value="C:apical plasma membrane"/>
    <property type="evidence" value="ECO:0007669"/>
    <property type="project" value="UniProtKB-SubCell"/>
</dbReference>
<dbReference type="GO" id="GO:0016020">
    <property type="term" value="C:membrane"/>
    <property type="evidence" value="ECO:0000250"/>
    <property type="project" value="ZFIN"/>
</dbReference>
<dbReference type="GO" id="GO:0005886">
    <property type="term" value="C:plasma membrane"/>
    <property type="evidence" value="ECO:0000318"/>
    <property type="project" value="GO_Central"/>
</dbReference>
<dbReference type="GO" id="GO:0008519">
    <property type="term" value="F:ammonium channel activity"/>
    <property type="evidence" value="ECO:0000318"/>
    <property type="project" value="GO_Central"/>
</dbReference>
<dbReference type="GO" id="GO:0097272">
    <property type="term" value="P:ammonium homeostasis"/>
    <property type="evidence" value="ECO:0000315"/>
    <property type="project" value="ZFIN"/>
</dbReference>
<dbReference type="GO" id="GO:0072488">
    <property type="term" value="P:ammonium transmembrane transport"/>
    <property type="evidence" value="ECO:0000315"/>
    <property type="project" value="ZFIN"/>
</dbReference>
<dbReference type="FunFam" id="1.10.3430.10:FF:000001">
    <property type="entry name" value="Ammonium transporter Rh type C"/>
    <property type="match status" value="1"/>
</dbReference>
<dbReference type="Gene3D" id="1.10.3430.10">
    <property type="entry name" value="Ammonium transporter AmtB like domains"/>
    <property type="match status" value="1"/>
</dbReference>
<dbReference type="InterPro" id="IPR029020">
    <property type="entry name" value="Ammonium/urea_transptr"/>
</dbReference>
<dbReference type="InterPro" id="IPR024041">
    <property type="entry name" value="NH4_transpt_AmtB-like_dom"/>
</dbReference>
<dbReference type="InterPro" id="IPR002229">
    <property type="entry name" value="RhesusRHD"/>
</dbReference>
<dbReference type="PANTHER" id="PTHR11730">
    <property type="entry name" value="AMMONIUM TRANSPORTER"/>
    <property type="match status" value="1"/>
</dbReference>
<dbReference type="PANTHER" id="PTHR11730:SF110">
    <property type="entry name" value="AMMONIUM TRANSPORTER RH TYPE C-LIKE 2"/>
    <property type="match status" value="1"/>
</dbReference>
<dbReference type="Pfam" id="PF00909">
    <property type="entry name" value="Ammonium_transp"/>
    <property type="match status" value="1"/>
</dbReference>
<dbReference type="PRINTS" id="PR00342">
    <property type="entry name" value="RHESUSRHD"/>
</dbReference>
<dbReference type="SUPFAM" id="SSF111352">
    <property type="entry name" value="Ammonium transporter"/>
    <property type="match status" value="1"/>
</dbReference>
<accession>Q8JI14</accession>
<accession>A5LHA7</accession>
<accession>Q6NYR3</accession>
<gene>
    <name type="primary">rhcgl2</name>
    <name type="synonym">rhcg</name>
    <name type="synonym">rhcg1</name>
    <name type="ORF">zgc:77520</name>
</gene>
<feature type="chain" id="PRO_0000283586" description="Ammonium transporter Rh type C-like 2">
    <location>
        <begin position="1"/>
        <end position="488"/>
    </location>
</feature>
<feature type="topological domain" description="Cytoplasmic" evidence="2">
    <location>
        <begin position="1"/>
        <end position="21"/>
    </location>
</feature>
<feature type="transmembrane region" description="Helical" evidence="2">
    <location>
        <begin position="22"/>
        <end position="42"/>
    </location>
</feature>
<feature type="topological domain" description="Extracellular" evidence="2">
    <location>
        <begin position="43"/>
        <end position="73"/>
    </location>
</feature>
<feature type="transmembrane region" description="Helical" evidence="2">
    <location>
        <begin position="74"/>
        <end position="94"/>
    </location>
</feature>
<feature type="topological domain" description="Cytoplasmic" evidence="2">
    <location>
        <begin position="95"/>
        <end position="98"/>
    </location>
</feature>
<feature type="transmembrane region" description="Helical" evidence="2">
    <location>
        <begin position="99"/>
        <end position="119"/>
    </location>
</feature>
<feature type="topological domain" description="Extracellular" evidence="2">
    <location>
        <begin position="120"/>
        <end position="139"/>
    </location>
</feature>
<feature type="transmembrane region" description="Helical" evidence="2">
    <location>
        <begin position="140"/>
        <end position="160"/>
    </location>
</feature>
<feature type="topological domain" description="Cytoplasmic" evidence="2">
    <location>
        <begin position="161"/>
        <end position="162"/>
    </location>
</feature>
<feature type="transmembrane region" description="Helical" evidence="2">
    <location>
        <begin position="163"/>
        <end position="183"/>
    </location>
</feature>
<feature type="topological domain" description="Extracellular" evidence="2">
    <location>
        <begin position="184"/>
        <end position="191"/>
    </location>
</feature>
<feature type="transmembrane region" description="Helical" evidence="2">
    <location>
        <begin position="192"/>
        <end position="214"/>
    </location>
</feature>
<feature type="topological domain" description="Cytoplasmic" evidence="2">
    <location>
        <begin position="215"/>
        <end position="232"/>
    </location>
</feature>
<feature type="transmembrane region" description="Helical" evidence="2">
    <location>
        <begin position="233"/>
        <end position="253"/>
    </location>
</feature>
<feature type="topological domain" description="Extracellular" evidence="2">
    <location>
        <begin position="254"/>
        <end position="264"/>
    </location>
</feature>
<feature type="transmembrane region" description="Helical" evidence="2">
    <location>
        <begin position="265"/>
        <end position="285"/>
    </location>
</feature>
<feature type="topological domain" description="Cytoplasmic" evidence="2">
    <location>
        <begin position="286"/>
        <end position="298"/>
    </location>
</feature>
<feature type="transmembrane region" description="Helical" evidence="2">
    <location>
        <begin position="299"/>
        <end position="319"/>
    </location>
</feature>
<feature type="topological domain" description="Extracellular" evidence="2">
    <location>
        <position position="320"/>
    </location>
</feature>
<feature type="transmembrane region" description="Helical" evidence="2">
    <location>
        <begin position="321"/>
        <end position="341"/>
    </location>
</feature>
<feature type="topological domain" description="Cytoplasmic" evidence="2">
    <location>
        <begin position="342"/>
        <end position="356"/>
    </location>
</feature>
<feature type="transmembrane region" description="Helical" evidence="2">
    <location>
        <begin position="357"/>
        <end position="377"/>
    </location>
</feature>
<feature type="topological domain" description="Extracellular" evidence="2">
    <location>
        <begin position="378"/>
        <end position="409"/>
    </location>
</feature>
<feature type="transmembrane region" description="Helical" evidence="2">
    <location>
        <begin position="410"/>
        <end position="430"/>
    </location>
</feature>
<feature type="topological domain" description="Cytoplasmic" evidence="2">
    <location>
        <begin position="431"/>
        <end position="488"/>
    </location>
</feature>
<feature type="glycosylation site" description="N-linked (GlcNAc...) asparagine" evidence="2">
    <location>
        <position position="60"/>
    </location>
</feature>
<feature type="sequence conflict" description="In Ref. 1; AAM90586." evidence="4" ref="1">
    <original>V</original>
    <variation>K</variation>
    <location>
        <position position="29"/>
    </location>
</feature>
<feature type="sequence conflict" description="In Ref. 1; AAM90586." evidence="4" ref="1">
    <original>N</original>
    <variation>H</variation>
    <location>
        <position position="51"/>
    </location>
</feature>
<feature type="sequence conflict" description="In Ref. 1; AAM90586." evidence="4" ref="1">
    <original>E</original>
    <variation>D</variation>
    <location>
        <position position="58"/>
    </location>
</feature>
<feature type="sequence conflict" description="In Ref. 1; AAM90586." evidence="4" ref="1">
    <original>I</original>
    <variation>K</variation>
    <location>
        <position position="61"/>
    </location>
</feature>
<feature type="sequence conflict" description="In Ref. 3; AAH66492." evidence="4" ref="3">
    <original>SP</original>
    <variation>GS</variation>
    <location>
        <begin position="124"/>
        <end position="125"/>
    </location>
</feature>
<feature type="sequence conflict" description="In Ref. 3; AAH66492." evidence="4" ref="3">
    <original>D</original>
    <variation>A</variation>
    <location>
        <position position="128"/>
    </location>
</feature>
<feature type="sequence conflict" description="In Ref. 1; AAM90586." evidence="4" ref="1">
    <original>I</original>
    <variation>F</variation>
    <location>
        <position position="136"/>
    </location>
</feature>
<feature type="sequence conflict" description="In Ref. 1; AAM90586." evidence="4" ref="1">
    <original>N</original>
    <variation>K</variation>
    <location>
        <position position="138"/>
    </location>
</feature>
<feature type="sequence conflict" description="In Ref. 2; BAF63790." evidence="4" ref="2">
    <original>S</original>
    <variation>G</variation>
    <location>
        <position position="148"/>
    </location>
</feature>
<feature type="sequence conflict" description="In Ref. 3; AAH66492." evidence="4" ref="3">
    <original>R</original>
    <variation>S</variation>
    <location>
        <position position="185"/>
    </location>
</feature>
<feature type="sequence conflict" description="In Ref. 3; AAH66492." evidence="4" ref="3">
    <original>N</original>
    <variation>H</variation>
    <location>
        <position position="188"/>
    </location>
</feature>
<feature type="sequence conflict" description="In Ref. 3; AAH66492." evidence="4" ref="3">
    <location>
        <begin position="307"/>
        <end position="322"/>
    </location>
</feature>
<feature type="sequence conflict" description="In Ref. 3; AAH66492." evidence="4" ref="3">
    <original>T</original>
    <variation>S</variation>
    <location>
        <position position="339"/>
    </location>
</feature>
<feature type="sequence conflict" description="In Ref. 3; AAH66492." evidence="4" ref="3">
    <original>K</original>
    <variation>G</variation>
    <location>
        <position position="387"/>
    </location>
</feature>
<feature type="sequence conflict" description="In Ref. 3; AAH66492." evidence="4" ref="3">
    <original>SIEGSNVT</original>
    <variation>YFKGPYGK</variation>
    <location>
        <begin position="391"/>
        <end position="398"/>
    </location>
</feature>
<feature type="sequence conflict" description="In Ref. 3; AAH66492." evidence="4" ref="3">
    <original>V</original>
    <variation>I</variation>
    <location>
        <position position="403"/>
    </location>
</feature>
<feature type="sequence conflict" description="In Ref. 3; AAH66492." evidence="4" ref="3">
    <original>P</original>
    <variation>S</variation>
    <location>
        <position position="472"/>
    </location>
</feature>
<comment type="function">
    <text evidence="1">Functions as an ammonia transporter. May play a role in the elimination of ammonia in the gill (By similarity).</text>
</comment>
<comment type="subunit">
    <text>Homotrimer.</text>
</comment>
<comment type="subcellular location">
    <subcellularLocation>
        <location evidence="1">Apical cell membrane</location>
        <topology evidence="1">Multi-pass membrane protein</topology>
    </subcellularLocation>
</comment>
<comment type="tissue specificity">
    <text evidence="3">At larval stages, expressed only in the yolk sac and gill. However, the kidney and the gills are major sites of expression in adults.</text>
</comment>
<comment type="similarity">
    <text evidence="4">Belongs to the ammonium transporter (TC 2.A.49) family. Rh subfamily.</text>
</comment>
<comment type="sequence caution" evidence="4">
    <conflict type="frameshift">
        <sequence resource="EMBL-CDS" id="AAH66492"/>
    </conflict>
</comment>
<name>RHCL2_DANRE</name>
<evidence type="ECO:0000250" key="1"/>
<evidence type="ECO:0000255" key="2"/>
<evidence type="ECO:0000269" key="3">
    <source>
    </source>
</evidence>
<evidence type="ECO:0000305" key="4"/>
<organism>
    <name type="scientific">Danio rerio</name>
    <name type="common">Zebrafish</name>
    <name type="synonym">Brachydanio rerio</name>
    <dbReference type="NCBI Taxonomy" id="7955"/>
    <lineage>
        <taxon>Eukaryota</taxon>
        <taxon>Metazoa</taxon>
        <taxon>Chordata</taxon>
        <taxon>Craniata</taxon>
        <taxon>Vertebrata</taxon>
        <taxon>Euteleostomi</taxon>
        <taxon>Actinopterygii</taxon>
        <taxon>Neopterygii</taxon>
        <taxon>Teleostei</taxon>
        <taxon>Ostariophysi</taxon>
        <taxon>Cypriniformes</taxon>
        <taxon>Danionidae</taxon>
        <taxon>Danioninae</taxon>
        <taxon>Danio</taxon>
    </lineage>
</organism>
<reference key="1">
    <citation type="journal article" date="2005" name="Proc. Natl. Acad. Sci. U.S.A.">
        <title>Evolutionary conservation and diversification of Rh family genes and proteins.</title>
        <authorList>
            <person name="Huang C.-H."/>
            <person name="Peng J."/>
        </authorList>
    </citation>
    <scope>NUCLEOTIDE SEQUENCE [MRNA]</scope>
</reference>
<reference key="2">
    <citation type="journal article" date="2007" name="Am. J. Physiol.">
        <title>Localization of ammonia transporter Rhcg1 in mitochondrion-rich cells of yolk sac, gill, and kidney of zebrafish and its ionic strength-dependent expression.</title>
        <authorList>
            <person name="Nakada T."/>
            <person name="Hoshijima K."/>
            <person name="Esaki M."/>
            <person name="Nagayoshi S."/>
            <person name="Kawakami K."/>
            <person name="Hirose S."/>
        </authorList>
    </citation>
    <scope>NUCLEOTIDE SEQUENCE [MRNA]</scope>
    <scope>TISSUE SPECIFICITY</scope>
</reference>
<reference key="3">
    <citation type="submission" date="2004-02" db="EMBL/GenBank/DDBJ databases">
        <authorList>
            <consortium name="NIH - Zebrafish Gene Collection (ZGC) project"/>
        </authorList>
    </citation>
    <scope>NUCLEOTIDE SEQUENCE [LARGE SCALE MRNA]</scope>
    <source>
        <tissue>Kidney</tissue>
    </source>
</reference>
<keyword id="KW-0924">Ammonia transport</keyword>
<keyword id="KW-1003">Cell membrane</keyword>
<keyword id="KW-0325">Glycoprotein</keyword>
<keyword id="KW-0472">Membrane</keyword>
<keyword id="KW-1185">Reference proteome</keyword>
<keyword id="KW-0812">Transmembrane</keyword>
<keyword id="KW-1133">Transmembrane helix</keyword>
<keyword id="KW-0813">Transport</keyword>
<protein>
    <recommendedName>
        <fullName>Ammonium transporter Rh type C-like 2</fullName>
    </recommendedName>
    <alternativeName>
        <fullName>Rhesus blood group family type C glycoprotein-like 2</fullName>
        <shortName>Rh family type C glycoprotein-like 2</shortName>
        <shortName>Rh type C glycoprotein-like 2</shortName>
    </alternativeName>
    <alternativeName>
        <fullName>drRhcg1</fullName>
    </alternativeName>
</protein>